<name>DJC76_ARATH</name>
<keyword id="KW-0143">Chaperone</keyword>
<keyword id="KW-0150">Chloroplast</keyword>
<keyword id="KW-0934">Plastid</keyword>
<keyword id="KW-1185">Reference proteome</keyword>
<keyword id="KW-0346">Stress response</keyword>
<keyword id="KW-0809">Transit peptide</keyword>
<feature type="transit peptide" description="Chloroplast" evidence="1">
    <location>
        <begin position="1"/>
        <end position="38"/>
    </location>
</feature>
<feature type="chain" id="PRO_0000440255" description="Chaperone protein dnaJ C76, chloroplastic" evidence="1">
    <location>
        <begin position="39"/>
        <end position="465"/>
    </location>
</feature>
<feature type="domain" description="J" evidence="2">
    <location>
        <begin position="50"/>
        <end position="113"/>
    </location>
</feature>
<feature type="region of interest" description="Disordered" evidence="3">
    <location>
        <begin position="346"/>
        <end position="385"/>
    </location>
</feature>
<feature type="compositionally biased region" description="Low complexity" evidence="3">
    <location>
        <begin position="350"/>
        <end position="362"/>
    </location>
</feature>
<feature type="compositionally biased region" description="Basic and acidic residues" evidence="3">
    <location>
        <begin position="370"/>
        <end position="384"/>
    </location>
</feature>
<protein>
    <recommendedName>
        <fullName evidence="8">Chaperone protein dnaJ C76, chloroplastic</fullName>
        <shortName evidence="6">atDjC76</shortName>
    </recommendedName>
    <alternativeName>
        <fullName evidence="7">AtDjC17</fullName>
    </alternativeName>
    <alternativeName>
        <fullName evidence="8">AtJ17</fullName>
    </alternativeName>
</protein>
<gene>
    <name evidence="6" type="primary">DJC76</name>
    <name evidence="10" type="ordered locus">At5g23240</name>
    <name evidence="11" type="ORF">MKD15.10</name>
</gene>
<dbReference type="EMBL" id="AB007648">
    <property type="protein sequence ID" value="BAB11179.1"/>
    <property type="molecule type" value="Genomic_DNA"/>
</dbReference>
<dbReference type="EMBL" id="CP002688">
    <property type="protein sequence ID" value="AED93140.1"/>
    <property type="molecule type" value="Genomic_DNA"/>
</dbReference>
<dbReference type="EMBL" id="AK117961">
    <property type="protein sequence ID" value="BAC42598.1"/>
    <property type="status" value="ALT_FRAME"/>
    <property type="molecule type" value="mRNA"/>
</dbReference>
<dbReference type="EMBL" id="BT030388">
    <property type="protein sequence ID" value="ABO45691.1"/>
    <property type="molecule type" value="mRNA"/>
</dbReference>
<dbReference type="RefSeq" id="NP_197715.1">
    <property type="nucleotide sequence ID" value="NM_122230.4"/>
</dbReference>
<dbReference type="SMR" id="Q9FMX6"/>
<dbReference type="FunCoup" id="Q9FMX6">
    <property type="interactions" value="128"/>
</dbReference>
<dbReference type="STRING" id="3702.Q9FMX6"/>
<dbReference type="PaxDb" id="3702-AT5G23240.1"/>
<dbReference type="ProteomicsDB" id="224104"/>
<dbReference type="EnsemblPlants" id="AT5G23240.1">
    <property type="protein sequence ID" value="AT5G23240.1"/>
    <property type="gene ID" value="AT5G23240"/>
</dbReference>
<dbReference type="GeneID" id="832388"/>
<dbReference type="Gramene" id="AT5G23240.1">
    <property type="protein sequence ID" value="AT5G23240.1"/>
    <property type="gene ID" value="AT5G23240"/>
</dbReference>
<dbReference type="KEGG" id="ath:AT5G23240"/>
<dbReference type="Araport" id="AT5G23240"/>
<dbReference type="TAIR" id="AT5G23240">
    <property type="gene designation" value="DJC76"/>
</dbReference>
<dbReference type="eggNOG" id="KOG0716">
    <property type="taxonomic scope" value="Eukaryota"/>
</dbReference>
<dbReference type="HOGENOM" id="CLU_588446_0_0_1"/>
<dbReference type="InParanoid" id="Q9FMX6"/>
<dbReference type="OMA" id="QWADSEH"/>
<dbReference type="PhylomeDB" id="Q9FMX6"/>
<dbReference type="PRO" id="PR:Q9FMX6"/>
<dbReference type="Proteomes" id="UP000006548">
    <property type="component" value="Chromosome 5"/>
</dbReference>
<dbReference type="ExpressionAtlas" id="Q9FMX6">
    <property type="expression patterns" value="baseline and differential"/>
</dbReference>
<dbReference type="GO" id="GO:0009507">
    <property type="term" value="C:chloroplast"/>
    <property type="evidence" value="ECO:0000314"/>
    <property type="project" value="TAIR"/>
</dbReference>
<dbReference type="CDD" id="cd06257">
    <property type="entry name" value="DnaJ"/>
    <property type="match status" value="1"/>
</dbReference>
<dbReference type="FunFam" id="3.30.70.20:FF:000039">
    <property type="entry name" value="Chaperone protein DnaJ"/>
    <property type="match status" value="1"/>
</dbReference>
<dbReference type="Gene3D" id="3.30.70.20">
    <property type="match status" value="1"/>
</dbReference>
<dbReference type="Gene3D" id="1.10.287.110">
    <property type="entry name" value="DnaJ domain"/>
    <property type="match status" value="1"/>
</dbReference>
<dbReference type="InterPro" id="IPR001623">
    <property type="entry name" value="DnaJ_domain"/>
</dbReference>
<dbReference type="InterPro" id="IPR036869">
    <property type="entry name" value="J_dom_sf"/>
</dbReference>
<dbReference type="PANTHER" id="PTHR45295">
    <property type="entry name" value="CHAPERONE PROTEIN DNAJ C76, CHLOROPLASTIC"/>
    <property type="match status" value="1"/>
</dbReference>
<dbReference type="PANTHER" id="PTHR45295:SF1">
    <property type="entry name" value="CHAPERONE PROTEIN DNAJ C76, CHLOROPLASTIC"/>
    <property type="match status" value="1"/>
</dbReference>
<dbReference type="Pfam" id="PF00226">
    <property type="entry name" value="DnaJ"/>
    <property type="match status" value="1"/>
</dbReference>
<dbReference type="Pfam" id="PF13370">
    <property type="entry name" value="Fer4_13"/>
    <property type="match status" value="1"/>
</dbReference>
<dbReference type="PRINTS" id="PR00625">
    <property type="entry name" value="JDOMAIN"/>
</dbReference>
<dbReference type="SMART" id="SM00271">
    <property type="entry name" value="DnaJ"/>
    <property type="match status" value="1"/>
</dbReference>
<dbReference type="SUPFAM" id="SSF54862">
    <property type="entry name" value="4Fe-4S ferredoxins"/>
    <property type="match status" value="1"/>
</dbReference>
<dbReference type="SUPFAM" id="SSF46565">
    <property type="entry name" value="Chaperone J-domain"/>
    <property type="match status" value="1"/>
</dbReference>
<dbReference type="PROSITE" id="PS50076">
    <property type="entry name" value="DNAJ_2"/>
    <property type="match status" value="1"/>
</dbReference>
<proteinExistence type="evidence at transcript level"/>
<organism>
    <name type="scientific">Arabidopsis thaliana</name>
    <name type="common">Mouse-ear cress</name>
    <dbReference type="NCBI Taxonomy" id="3702"/>
    <lineage>
        <taxon>Eukaryota</taxon>
        <taxon>Viridiplantae</taxon>
        <taxon>Streptophyta</taxon>
        <taxon>Embryophyta</taxon>
        <taxon>Tracheophyta</taxon>
        <taxon>Spermatophyta</taxon>
        <taxon>Magnoliopsida</taxon>
        <taxon>eudicotyledons</taxon>
        <taxon>Gunneridae</taxon>
        <taxon>Pentapetalae</taxon>
        <taxon>rosids</taxon>
        <taxon>malvids</taxon>
        <taxon>Brassicales</taxon>
        <taxon>Brassicaceae</taxon>
        <taxon>Camelineae</taxon>
        <taxon>Arabidopsis</taxon>
    </lineage>
</organism>
<sequence>MTPAIFSPTTLPPSTATWPCSTSQKLITVRSPLKFKCRATSSSSSITDFDLYDLLGIDRSSDKSQIKSAYRALQKRCHPDIAGDPGHDMAIILNEAYQLLSDPISRQAYDKEQAKLEELRGYTGKPIYSVWCGPETEQRAAFVDEVKCVGCLKCALCAEKTFAIETAYGRARVVAQWADPESKIKEAIEACPVDCISMVERSDLAPLEFLMSKQPRGNVRIGVGNTVGERVSNVFVDVKKFQERYAKAMSRTTKETSQREVQISAVEAIRSISNWLYWRSSPYTKPLSPESNMSLTFTKRKKAVDPDIRKLQDVVAAMKQADQSGRTKEKGSAYLLGEDYWSPSNAALPSSGNNNGSKASSNPQVTRKTFPSEEKPTSRRENRRQFRIKKFPIGTAIVAVFLVQYQASYRAASELNDHIGGSLALSIVNSPWQQILLAGVTWYFIGAMLLQLVEAVQHKLEDKET</sequence>
<comment type="function">
    <text evidence="5 9">May function together with HSC70 chaperone to assist protein folding and prevent protein aggregation during salt stress in the chloroplast (Probable). Involved in root development. Required for the position-dependent cell fate determination during root hair development (PubMed:25339971).</text>
</comment>
<comment type="subcellular location">
    <subcellularLocation>
        <location evidence="4">Plastid</location>
        <location evidence="4">Chloroplast</location>
    </subcellularLocation>
</comment>
<comment type="tissue specificity">
    <text evidence="5">Expressed in roots, exclusively in the stele.</text>
</comment>
<comment type="induction">
    <text evidence="4">Induced by salt stress.</text>
</comment>
<comment type="disruption phenotype">
    <text evidence="5">Altered root hair development and reduced hair length.</text>
</comment>
<comment type="similarity">
    <text evidence="8">Belongs to the DnaJ family.</text>
</comment>
<comment type="sequence caution" evidence="8">
    <conflict type="frameshift">
        <sequence resource="EMBL-CDS" id="BAC42598"/>
    </conflict>
</comment>
<accession>Q9FMX6</accession>
<accession>Q8GXY8</accession>
<reference key="1">
    <citation type="journal article" date="1997" name="DNA Res.">
        <title>Structural analysis of Arabidopsis thaliana chromosome 5. III. Sequence features of the regions of 1,191,918 bp covered by seventeen physically assigned P1 clones.</title>
        <authorList>
            <person name="Nakamura Y."/>
            <person name="Sato S."/>
            <person name="Kaneko T."/>
            <person name="Kotani H."/>
            <person name="Asamizu E."/>
            <person name="Miyajima N."/>
            <person name="Tabata S."/>
        </authorList>
    </citation>
    <scope>NUCLEOTIDE SEQUENCE [LARGE SCALE GENOMIC DNA]</scope>
    <source>
        <strain>cv. Columbia</strain>
    </source>
</reference>
<reference key="2">
    <citation type="journal article" date="2017" name="Plant J.">
        <title>Araport11: a complete reannotation of the Arabidopsis thaliana reference genome.</title>
        <authorList>
            <person name="Cheng C.Y."/>
            <person name="Krishnakumar V."/>
            <person name="Chan A.P."/>
            <person name="Thibaud-Nissen F."/>
            <person name="Schobel S."/>
            <person name="Town C.D."/>
        </authorList>
    </citation>
    <scope>GENOME REANNOTATION</scope>
    <source>
        <strain>cv. Columbia</strain>
    </source>
</reference>
<reference key="3">
    <citation type="journal article" date="2002" name="Science">
        <title>Functional annotation of a full-length Arabidopsis cDNA collection.</title>
        <authorList>
            <person name="Seki M."/>
            <person name="Narusaka M."/>
            <person name="Kamiya A."/>
            <person name="Ishida J."/>
            <person name="Satou M."/>
            <person name="Sakurai T."/>
            <person name="Nakajima M."/>
            <person name="Enju A."/>
            <person name="Akiyama K."/>
            <person name="Oono Y."/>
            <person name="Muramatsu M."/>
            <person name="Hayashizaki Y."/>
            <person name="Kawai J."/>
            <person name="Carninci P."/>
            <person name="Itoh M."/>
            <person name="Ishii Y."/>
            <person name="Arakawa T."/>
            <person name="Shibata K."/>
            <person name="Shinagawa A."/>
            <person name="Shinozaki K."/>
        </authorList>
    </citation>
    <scope>NUCLEOTIDE SEQUENCE [LARGE SCALE MRNA]</scope>
    <source>
        <strain>cv. Columbia</strain>
    </source>
</reference>
<reference key="4">
    <citation type="submission" date="2007-03" db="EMBL/GenBank/DDBJ databases">
        <title>Arabidopsis ORF clones.</title>
        <authorList>
            <person name="Kim C.J."/>
            <person name="Bautista V.R."/>
            <person name="Chen H."/>
            <person name="De Los Reyes C."/>
            <person name="Wu S.Y."/>
            <person name="Ecker J.R."/>
        </authorList>
    </citation>
    <scope>NUCLEOTIDE SEQUENCE [LARGE SCALE MRNA]</scope>
    <source>
        <strain>cv. Columbia</strain>
    </source>
</reference>
<reference key="5">
    <citation type="journal article" date="2013" name="PLoS ONE">
        <title>Evolution of chloroplast J proteins.</title>
        <authorList>
            <person name="Chiu C.C."/>
            <person name="Chen L.J."/>
            <person name="Su P.H."/>
            <person name="Li H.M."/>
        </authorList>
    </citation>
    <scope>FUNCTION</scope>
    <scope>SUBCELLULAR LOCATION</scope>
    <scope>INDUCTION BY SALT STRESS</scope>
</reference>
<reference key="6">
    <citation type="journal article" date="2014" name="Front. Plant Sci.">
        <title>The involvement of J-protein AtDjC17 in root development in Arabidopsis.</title>
        <authorList>
            <person name="Petti C."/>
            <person name="Nair M."/>
            <person name="DeBolt S."/>
        </authorList>
    </citation>
    <scope>FUNCTION</scope>
    <scope>TISSUE SPECIFICITY</scope>
    <scope>DISRUPTION PHENOTYPE</scope>
</reference>
<evidence type="ECO:0000255" key="1"/>
<evidence type="ECO:0000255" key="2">
    <source>
        <dbReference type="PROSITE-ProRule" id="PRU00286"/>
    </source>
</evidence>
<evidence type="ECO:0000256" key="3">
    <source>
        <dbReference type="SAM" id="MobiDB-lite"/>
    </source>
</evidence>
<evidence type="ECO:0000269" key="4">
    <source>
    </source>
</evidence>
<evidence type="ECO:0000269" key="5">
    <source>
    </source>
</evidence>
<evidence type="ECO:0000303" key="6">
    <source>
    </source>
</evidence>
<evidence type="ECO:0000303" key="7">
    <source>
    </source>
</evidence>
<evidence type="ECO:0000305" key="8"/>
<evidence type="ECO:0000305" key="9">
    <source>
    </source>
</evidence>
<evidence type="ECO:0000312" key="10">
    <source>
        <dbReference type="Araport" id="AT5G23240"/>
    </source>
</evidence>
<evidence type="ECO:0000312" key="11">
    <source>
        <dbReference type="EMBL" id="ABO45691.1"/>
    </source>
</evidence>